<comment type="function">
    <text evidence="1">Involved in protein export. Acts as a chaperone by maintaining the newly synthesized protein in an open conformation. Functions as a peptidyl-prolyl cis-trans isomerase.</text>
</comment>
<comment type="catalytic activity">
    <reaction evidence="1">
        <text>[protein]-peptidylproline (omega=180) = [protein]-peptidylproline (omega=0)</text>
        <dbReference type="Rhea" id="RHEA:16237"/>
        <dbReference type="Rhea" id="RHEA-COMP:10747"/>
        <dbReference type="Rhea" id="RHEA-COMP:10748"/>
        <dbReference type="ChEBI" id="CHEBI:83833"/>
        <dbReference type="ChEBI" id="CHEBI:83834"/>
        <dbReference type="EC" id="5.2.1.8"/>
    </reaction>
</comment>
<comment type="subcellular location">
    <subcellularLocation>
        <location>Cytoplasm</location>
    </subcellularLocation>
    <text evidence="1">About half TF is bound to the ribosome near the polypeptide exit tunnel while the other half is free in the cytoplasm.</text>
</comment>
<comment type="domain">
    <text evidence="1">Consists of 3 domains; the N-terminus binds the ribosome, the middle domain has PPIase activity, while the C-terminus has intrinsic chaperone activity on its own.</text>
</comment>
<comment type="similarity">
    <text evidence="1">Belongs to the FKBP-type PPIase family. Tig subfamily.</text>
</comment>
<sequence length="454" mass="50829">MKVIQEKLPASQVGLEIEVPADVTQKAYDDTVRKLARTVNLPGFRKGKVPKQILIQRLGPNRIKASVLEDLIDDSLKAAIAQENIEALGNFQLKSSFDDLISAYKPGEASSFKAAVDVPATVTLNSYKGLSFKAEKSEYDPADLDEFLTQKQRELATLVPVEDRAAQMGDVAIADYEGRYVNDAGEEEEDIIPGTQAEDFSLDLEEGKFIPGFVDGFVGMKPEETKKFTVTFPEDYGNEEMAGKQVSFTVTLKELKSRELPELDDEFASEATNEEFETLAAWQESLEAQLKENAEISTKNSVRRYLLEQLAANNSTELPEVSVNEEITAVLTQQMMEFSRMGIDVNRIFTKDMIPKLRETARPEAEQRLSNSLILTEIAKVEKIEIDTDKFNERLEEAKAELQEGFDEERLQEAIKEELTIDATLDWLEEQSEIEFVPAGTLEAEEAEAANGEE</sequence>
<name>TIG_PICP2</name>
<accession>B1XL18</accession>
<evidence type="ECO:0000255" key="1">
    <source>
        <dbReference type="HAMAP-Rule" id="MF_00303"/>
    </source>
</evidence>
<proteinExistence type="inferred from homology"/>
<gene>
    <name evidence="1" type="primary">tig</name>
    <name type="ordered locus">SYNPCC7002_A1276</name>
</gene>
<dbReference type="EC" id="5.2.1.8" evidence="1"/>
<dbReference type="EMBL" id="CP000951">
    <property type="protein sequence ID" value="ACA99273.1"/>
    <property type="molecule type" value="Genomic_DNA"/>
</dbReference>
<dbReference type="RefSeq" id="WP_012306896.1">
    <property type="nucleotide sequence ID" value="NZ_JAHHPU010000001.1"/>
</dbReference>
<dbReference type="SMR" id="B1XL18"/>
<dbReference type="STRING" id="32049.SYNPCC7002_A1276"/>
<dbReference type="KEGG" id="syp:SYNPCC7002_A1276"/>
<dbReference type="eggNOG" id="COG0544">
    <property type="taxonomic scope" value="Bacteria"/>
</dbReference>
<dbReference type="HOGENOM" id="CLU_033058_3_1_3"/>
<dbReference type="Proteomes" id="UP000001688">
    <property type="component" value="Chromosome"/>
</dbReference>
<dbReference type="GO" id="GO:0005737">
    <property type="term" value="C:cytoplasm"/>
    <property type="evidence" value="ECO:0007669"/>
    <property type="project" value="UniProtKB-SubCell"/>
</dbReference>
<dbReference type="GO" id="GO:0003755">
    <property type="term" value="F:peptidyl-prolyl cis-trans isomerase activity"/>
    <property type="evidence" value="ECO:0007669"/>
    <property type="project" value="UniProtKB-UniRule"/>
</dbReference>
<dbReference type="GO" id="GO:0044183">
    <property type="term" value="F:protein folding chaperone"/>
    <property type="evidence" value="ECO:0007669"/>
    <property type="project" value="TreeGrafter"/>
</dbReference>
<dbReference type="GO" id="GO:0043022">
    <property type="term" value="F:ribosome binding"/>
    <property type="evidence" value="ECO:0007669"/>
    <property type="project" value="TreeGrafter"/>
</dbReference>
<dbReference type="GO" id="GO:0051083">
    <property type="term" value="P:'de novo' cotranslational protein folding"/>
    <property type="evidence" value="ECO:0007669"/>
    <property type="project" value="TreeGrafter"/>
</dbReference>
<dbReference type="GO" id="GO:0051301">
    <property type="term" value="P:cell division"/>
    <property type="evidence" value="ECO:0007669"/>
    <property type="project" value="UniProtKB-KW"/>
</dbReference>
<dbReference type="GO" id="GO:0061077">
    <property type="term" value="P:chaperone-mediated protein folding"/>
    <property type="evidence" value="ECO:0007669"/>
    <property type="project" value="TreeGrafter"/>
</dbReference>
<dbReference type="GO" id="GO:0015031">
    <property type="term" value="P:protein transport"/>
    <property type="evidence" value="ECO:0007669"/>
    <property type="project" value="UniProtKB-UniRule"/>
</dbReference>
<dbReference type="GO" id="GO:0043335">
    <property type="term" value="P:protein unfolding"/>
    <property type="evidence" value="ECO:0007669"/>
    <property type="project" value="TreeGrafter"/>
</dbReference>
<dbReference type="FunFam" id="3.10.50.40:FF:000001">
    <property type="entry name" value="Trigger factor"/>
    <property type="match status" value="1"/>
</dbReference>
<dbReference type="FunFam" id="3.30.70.1050:FF:000004">
    <property type="entry name" value="Trigger factor"/>
    <property type="match status" value="1"/>
</dbReference>
<dbReference type="Gene3D" id="3.10.50.40">
    <property type="match status" value="1"/>
</dbReference>
<dbReference type="Gene3D" id="3.30.70.1050">
    <property type="entry name" value="Trigger factor ribosome-binding domain"/>
    <property type="match status" value="1"/>
</dbReference>
<dbReference type="Gene3D" id="1.10.3120.10">
    <property type="entry name" value="Trigger factor, C-terminal domain"/>
    <property type="match status" value="1"/>
</dbReference>
<dbReference type="HAMAP" id="MF_00303">
    <property type="entry name" value="Trigger_factor_Tig"/>
    <property type="match status" value="1"/>
</dbReference>
<dbReference type="InterPro" id="IPR046357">
    <property type="entry name" value="PPIase_dom_sf"/>
</dbReference>
<dbReference type="InterPro" id="IPR001179">
    <property type="entry name" value="PPIase_FKBP_dom"/>
</dbReference>
<dbReference type="InterPro" id="IPR005215">
    <property type="entry name" value="Trig_fac"/>
</dbReference>
<dbReference type="InterPro" id="IPR008880">
    <property type="entry name" value="Trigger_fac_C"/>
</dbReference>
<dbReference type="InterPro" id="IPR037041">
    <property type="entry name" value="Trigger_fac_C_sf"/>
</dbReference>
<dbReference type="InterPro" id="IPR008881">
    <property type="entry name" value="Trigger_fac_ribosome-bd_bac"/>
</dbReference>
<dbReference type="InterPro" id="IPR036611">
    <property type="entry name" value="Trigger_fac_ribosome-bd_sf"/>
</dbReference>
<dbReference type="InterPro" id="IPR027304">
    <property type="entry name" value="Trigger_fact/SurA_dom_sf"/>
</dbReference>
<dbReference type="NCBIfam" id="TIGR00115">
    <property type="entry name" value="tig"/>
    <property type="match status" value="1"/>
</dbReference>
<dbReference type="PANTHER" id="PTHR30560">
    <property type="entry name" value="TRIGGER FACTOR CHAPERONE AND PEPTIDYL-PROLYL CIS/TRANS ISOMERASE"/>
    <property type="match status" value="1"/>
</dbReference>
<dbReference type="PANTHER" id="PTHR30560:SF3">
    <property type="entry name" value="TRIGGER FACTOR-LIKE PROTEIN TIG, CHLOROPLASTIC"/>
    <property type="match status" value="1"/>
</dbReference>
<dbReference type="Pfam" id="PF00254">
    <property type="entry name" value="FKBP_C"/>
    <property type="match status" value="1"/>
</dbReference>
<dbReference type="Pfam" id="PF05698">
    <property type="entry name" value="Trigger_C"/>
    <property type="match status" value="1"/>
</dbReference>
<dbReference type="Pfam" id="PF05697">
    <property type="entry name" value="Trigger_N"/>
    <property type="match status" value="1"/>
</dbReference>
<dbReference type="PIRSF" id="PIRSF003095">
    <property type="entry name" value="Trigger_factor"/>
    <property type="match status" value="1"/>
</dbReference>
<dbReference type="SUPFAM" id="SSF54534">
    <property type="entry name" value="FKBP-like"/>
    <property type="match status" value="1"/>
</dbReference>
<dbReference type="SUPFAM" id="SSF109998">
    <property type="entry name" value="Triger factor/SurA peptide-binding domain-like"/>
    <property type="match status" value="1"/>
</dbReference>
<dbReference type="SUPFAM" id="SSF102735">
    <property type="entry name" value="Trigger factor ribosome-binding domain"/>
    <property type="match status" value="1"/>
</dbReference>
<dbReference type="PROSITE" id="PS50059">
    <property type="entry name" value="FKBP_PPIASE"/>
    <property type="match status" value="1"/>
</dbReference>
<organism>
    <name type="scientific">Picosynechococcus sp. (strain ATCC 27264 / PCC 7002 / PR-6)</name>
    <name type="common">Agmenellum quadruplicatum</name>
    <dbReference type="NCBI Taxonomy" id="32049"/>
    <lineage>
        <taxon>Bacteria</taxon>
        <taxon>Bacillati</taxon>
        <taxon>Cyanobacteriota</taxon>
        <taxon>Cyanophyceae</taxon>
        <taxon>Oscillatoriophycideae</taxon>
        <taxon>Chroococcales</taxon>
        <taxon>Geminocystaceae</taxon>
        <taxon>Picosynechococcus</taxon>
    </lineage>
</organism>
<protein>
    <recommendedName>
        <fullName evidence="1">Trigger factor</fullName>
        <shortName evidence="1">TF</shortName>
        <ecNumber evidence="1">5.2.1.8</ecNumber>
    </recommendedName>
    <alternativeName>
        <fullName evidence="1">PPIase</fullName>
    </alternativeName>
</protein>
<keyword id="KW-0131">Cell cycle</keyword>
<keyword id="KW-0132">Cell division</keyword>
<keyword id="KW-0143">Chaperone</keyword>
<keyword id="KW-0963">Cytoplasm</keyword>
<keyword id="KW-0413">Isomerase</keyword>
<keyword id="KW-1185">Reference proteome</keyword>
<keyword id="KW-0697">Rotamase</keyword>
<reference key="1">
    <citation type="submission" date="2008-02" db="EMBL/GenBank/DDBJ databases">
        <title>Complete sequence of Synechococcus sp. PCC 7002.</title>
        <authorList>
            <person name="Li T."/>
            <person name="Zhao J."/>
            <person name="Zhao C."/>
            <person name="Liu Z."/>
            <person name="Zhao F."/>
            <person name="Marquardt J."/>
            <person name="Nomura C.T."/>
            <person name="Persson S."/>
            <person name="Detter J.C."/>
            <person name="Richardson P.M."/>
            <person name="Lanz C."/>
            <person name="Schuster S.C."/>
            <person name="Wang J."/>
            <person name="Li S."/>
            <person name="Huang X."/>
            <person name="Cai T."/>
            <person name="Yu Z."/>
            <person name="Luo J."/>
            <person name="Zhao J."/>
            <person name="Bryant D.A."/>
        </authorList>
    </citation>
    <scope>NUCLEOTIDE SEQUENCE [LARGE SCALE GENOMIC DNA]</scope>
    <source>
        <strain>ATCC 27264 / PCC 7002 / PR-6</strain>
    </source>
</reference>
<feature type="chain" id="PRO_1000115591" description="Trigger factor">
    <location>
        <begin position="1"/>
        <end position="454"/>
    </location>
</feature>
<feature type="domain" description="PPIase FKBP-type" evidence="1">
    <location>
        <begin position="169"/>
        <end position="261"/>
    </location>
</feature>